<dbReference type="EC" id="5.3.1.9" evidence="1"/>
<dbReference type="EMBL" id="CP001322">
    <property type="protein sequence ID" value="ACL02726.1"/>
    <property type="molecule type" value="Genomic_DNA"/>
</dbReference>
<dbReference type="RefSeq" id="WP_012610164.1">
    <property type="nucleotide sequence ID" value="NC_011768.1"/>
</dbReference>
<dbReference type="SMR" id="B8FK51"/>
<dbReference type="KEGG" id="dal:Dalk_1023"/>
<dbReference type="eggNOG" id="COG0166">
    <property type="taxonomic scope" value="Bacteria"/>
</dbReference>
<dbReference type="HOGENOM" id="CLU_017947_3_1_7"/>
<dbReference type="UniPathway" id="UPA00109">
    <property type="reaction ID" value="UER00181"/>
</dbReference>
<dbReference type="UniPathway" id="UPA00138"/>
<dbReference type="Proteomes" id="UP000000739">
    <property type="component" value="Chromosome"/>
</dbReference>
<dbReference type="GO" id="GO:0005829">
    <property type="term" value="C:cytosol"/>
    <property type="evidence" value="ECO:0007669"/>
    <property type="project" value="TreeGrafter"/>
</dbReference>
<dbReference type="GO" id="GO:0097367">
    <property type="term" value="F:carbohydrate derivative binding"/>
    <property type="evidence" value="ECO:0007669"/>
    <property type="project" value="InterPro"/>
</dbReference>
<dbReference type="GO" id="GO:0004347">
    <property type="term" value="F:glucose-6-phosphate isomerase activity"/>
    <property type="evidence" value="ECO:0007669"/>
    <property type="project" value="UniProtKB-UniRule"/>
</dbReference>
<dbReference type="GO" id="GO:0048029">
    <property type="term" value="F:monosaccharide binding"/>
    <property type="evidence" value="ECO:0007669"/>
    <property type="project" value="TreeGrafter"/>
</dbReference>
<dbReference type="GO" id="GO:0006094">
    <property type="term" value="P:gluconeogenesis"/>
    <property type="evidence" value="ECO:0007669"/>
    <property type="project" value="UniProtKB-UniRule"/>
</dbReference>
<dbReference type="GO" id="GO:0051156">
    <property type="term" value="P:glucose 6-phosphate metabolic process"/>
    <property type="evidence" value="ECO:0007669"/>
    <property type="project" value="TreeGrafter"/>
</dbReference>
<dbReference type="GO" id="GO:0006096">
    <property type="term" value="P:glycolytic process"/>
    <property type="evidence" value="ECO:0007669"/>
    <property type="project" value="UniProtKB-UniRule"/>
</dbReference>
<dbReference type="CDD" id="cd05015">
    <property type="entry name" value="SIS_PGI_1"/>
    <property type="match status" value="1"/>
</dbReference>
<dbReference type="CDD" id="cd05016">
    <property type="entry name" value="SIS_PGI_2"/>
    <property type="match status" value="1"/>
</dbReference>
<dbReference type="FunFam" id="1.10.1390.10:FF:000001">
    <property type="entry name" value="Glucose-6-phosphate isomerase"/>
    <property type="match status" value="1"/>
</dbReference>
<dbReference type="FunFam" id="3.40.50.10490:FF:000004">
    <property type="entry name" value="Glucose-6-phosphate isomerase"/>
    <property type="match status" value="1"/>
</dbReference>
<dbReference type="Gene3D" id="1.10.1390.10">
    <property type="match status" value="1"/>
</dbReference>
<dbReference type="Gene3D" id="3.40.50.10490">
    <property type="entry name" value="Glucose-6-phosphate isomerase like protein, domain 1"/>
    <property type="match status" value="2"/>
</dbReference>
<dbReference type="HAMAP" id="MF_00473">
    <property type="entry name" value="G6P_isomerase"/>
    <property type="match status" value="1"/>
</dbReference>
<dbReference type="InterPro" id="IPR001672">
    <property type="entry name" value="G6P_Isomerase"/>
</dbReference>
<dbReference type="InterPro" id="IPR023096">
    <property type="entry name" value="G6P_Isomerase_C"/>
</dbReference>
<dbReference type="InterPro" id="IPR018189">
    <property type="entry name" value="Phosphoglucose_isomerase_CS"/>
</dbReference>
<dbReference type="InterPro" id="IPR046348">
    <property type="entry name" value="SIS_dom_sf"/>
</dbReference>
<dbReference type="InterPro" id="IPR035476">
    <property type="entry name" value="SIS_PGI_1"/>
</dbReference>
<dbReference type="InterPro" id="IPR035482">
    <property type="entry name" value="SIS_PGI_2"/>
</dbReference>
<dbReference type="NCBIfam" id="NF001211">
    <property type="entry name" value="PRK00179.1"/>
    <property type="match status" value="1"/>
</dbReference>
<dbReference type="PANTHER" id="PTHR11469">
    <property type="entry name" value="GLUCOSE-6-PHOSPHATE ISOMERASE"/>
    <property type="match status" value="1"/>
</dbReference>
<dbReference type="PANTHER" id="PTHR11469:SF1">
    <property type="entry name" value="GLUCOSE-6-PHOSPHATE ISOMERASE"/>
    <property type="match status" value="1"/>
</dbReference>
<dbReference type="Pfam" id="PF00342">
    <property type="entry name" value="PGI"/>
    <property type="match status" value="1"/>
</dbReference>
<dbReference type="PRINTS" id="PR00662">
    <property type="entry name" value="G6PISOMERASE"/>
</dbReference>
<dbReference type="SUPFAM" id="SSF53697">
    <property type="entry name" value="SIS domain"/>
    <property type="match status" value="1"/>
</dbReference>
<dbReference type="PROSITE" id="PS00765">
    <property type="entry name" value="P_GLUCOSE_ISOMERASE_1"/>
    <property type="match status" value="1"/>
</dbReference>
<dbReference type="PROSITE" id="PS00174">
    <property type="entry name" value="P_GLUCOSE_ISOMERASE_2"/>
    <property type="match status" value="1"/>
</dbReference>
<dbReference type="PROSITE" id="PS51463">
    <property type="entry name" value="P_GLUCOSE_ISOMERASE_3"/>
    <property type="match status" value="1"/>
</dbReference>
<gene>
    <name evidence="1" type="primary">pgi</name>
    <name type="ordered locus">Dalk_1023</name>
</gene>
<sequence>MKKTNPVKTRAWLFLEKHYEDIKNRHMRDFFKEDPRRFDNFSLALDDILVDFSKNRITTKTLELLLNLAHEAGLKEMINSMFSGEHINETENRAVLHTALRRQGDEPVLADGKDVMPDVRAVLEQMRVFSGRIITGEWKGFTGKAITDVVNIGIGGSDLGPVMVTECLKPYAKPHMNVHFVSNVDGTHIAETLKLLNPETTLFMIASKTFTTQETMTNAYTARAWFLEKAGDKKHVARHFVALSTNKEAVEEFGIDSQNMFEFWDWVGGRYSLWSAIGLSIACYVGFENFHELLKGAYAMDVHFQKEPFERNIPVILALIGIWYNNFFNAQTEAILPYDQYMHRFPAYFQQGNMESNGKSVDRDGNPVTWQTGPIIWGEPGTNGQHAFYQLIHQGTKMIPADFLAPAQSHNPIGEHHKILLSNFFAQTEALMNGKTAAEVQKELEAAGKLPEEIAEILPHKVFDGNRPTNSILFKKLTPRTLGSLIAMYEHKIFVQGALWNIYSFDQWGVELGKQLAKKILPELEDERPVNSHDASTNGLINAFKHMMG</sequence>
<protein>
    <recommendedName>
        <fullName evidence="1">Glucose-6-phosphate isomerase</fullName>
        <shortName evidence="1">GPI</shortName>
        <ecNumber evidence="1">5.3.1.9</ecNumber>
    </recommendedName>
    <alternativeName>
        <fullName evidence="1">Phosphoglucose isomerase</fullName>
        <shortName evidence="1">PGI</shortName>
    </alternativeName>
    <alternativeName>
        <fullName evidence="1">Phosphohexose isomerase</fullName>
        <shortName evidence="1">PHI</shortName>
    </alternativeName>
</protein>
<keyword id="KW-0963">Cytoplasm</keyword>
<keyword id="KW-0312">Gluconeogenesis</keyword>
<keyword id="KW-0324">Glycolysis</keyword>
<keyword id="KW-0413">Isomerase</keyword>
<keyword id="KW-1185">Reference proteome</keyword>
<organism>
    <name type="scientific">Desulfatibacillum aliphaticivorans</name>
    <dbReference type="NCBI Taxonomy" id="218208"/>
    <lineage>
        <taxon>Bacteria</taxon>
        <taxon>Pseudomonadati</taxon>
        <taxon>Thermodesulfobacteriota</taxon>
        <taxon>Desulfobacteria</taxon>
        <taxon>Desulfobacterales</taxon>
        <taxon>Desulfatibacillaceae</taxon>
        <taxon>Desulfatibacillum</taxon>
    </lineage>
</organism>
<proteinExistence type="inferred from homology"/>
<comment type="function">
    <text evidence="1">Catalyzes the reversible isomerization of glucose-6-phosphate to fructose-6-phosphate.</text>
</comment>
<comment type="catalytic activity">
    <reaction evidence="1">
        <text>alpha-D-glucose 6-phosphate = beta-D-fructose 6-phosphate</text>
        <dbReference type="Rhea" id="RHEA:11816"/>
        <dbReference type="ChEBI" id="CHEBI:57634"/>
        <dbReference type="ChEBI" id="CHEBI:58225"/>
        <dbReference type="EC" id="5.3.1.9"/>
    </reaction>
</comment>
<comment type="pathway">
    <text evidence="1">Carbohydrate biosynthesis; gluconeogenesis.</text>
</comment>
<comment type="pathway">
    <text evidence="1">Carbohydrate degradation; glycolysis; D-glyceraldehyde 3-phosphate and glycerone phosphate from D-glucose: step 2/4.</text>
</comment>
<comment type="subcellular location">
    <subcellularLocation>
        <location evidence="1">Cytoplasm</location>
    </subcellularLocation>
</comment>
<comment type="similarity">
    <text evidence="1">Belongs to the GPI family.</text>
</comment>
<accession>B8FK51</accession>
<evidence type="ECO:0000255" key="1">
    <source>
        <dbReference type="HAMAP-Rule" id="MF_00473"/>
    </source>
</evidence>
<name>G6PI_DESAL</name>
<feature type="chain" id="PRO_1000135525" description="Glucose-6-phosphate isomerase">
    <location>
        <begin position="1"/>
        <end position="549"/>
    </location>
</feature>
<feature type="active site" description="Proton donor" evidence="1">
    <location>
        <position position="355"/>
    </location>
</feature>
<feature type="active site" evidence="1">
    <location>
        <position position="386"/>
    </location>
</feature>
<feature type="active site" evidence="1">
    <location>
        <position position="514"/>
    </location>
</feature>
<reference key="1">
    <citation type="journal article" date="2012" name="Environ. Microbiol.">
        <title>The genome sequence of Desulfatibacillum alkenivorans AK-01: a blueprint for anaerobic alkane oxidation.</title>
        <authorList>
            <person name="Callaghan A.V."/>
            <person name="Morris B.E."/>
            <person name="Pereira I.A."/>
            <person name="McInerney M.J."/>
            <person name="Austin R.N."/>
            <person name="Groves J.T."/>
            <person name="Kukor J.J."/>
            <person name="Suflita J.M."/>
            <person name="Young L.Y."/>
            <person name="Zylstra G.J."/>
            <person name="Wawrik B."/>
        </authorList>
    </citation>
    <scope>NUCLEOTIDE SEQUENCE [LARGE SCALE GENOMIC DNA]</scope>
    <source>
        <strain>AK-01</strain>
    </source>
</reference>